<gene>
    <name type="ordered locus">MSMEG_2350</name>
    <name type="ordered locus">MSMEI_2290</name>
    <name type="ORF">MSMEG2349</name>
</gene>
<evidence type="ECO:0000269" key="1">
    <source>
    </source>
</evidence>
<evidence type="ECO:0000305" key="2"/>
<sequence length="257" mass="28182">MGDPDNALPSALPLTGERTIPGLAEENYWFRRHEVVYQRLAHRCAGRDVLEAGCGEGYGADLIADVARRVIGLDYDEATVAHVRARYPRVDIRHGNLAELPLPDASVDVVVNFQVIEHLWDQAQFVSECFRVLRPGGVFLVSTPNRITFSPGRDTPLNPFHTRELNAAELTELLETAGFEVEDTLGVFHGAGLAELDARHGGSIIEAQVQRAVADAPWDEQLLADVAAVRTDDFDLTPAAERDIDDSLDLVAIAVRP</sequence>
<organism>
    <name type="scientific">Mycolicibacterium smegmatis (strain ATCC 700084 / mc(2)155)</name>
    <name type="common">Mycobacterium smegmatis</name>
    <dbReference type="NCBI Taxonomy" id="246196"/>
    <lineage>
        <taxon>Bacteria</taxon>
        <taxon>Bacillati</taxon>
        <taxon>Actinomycetota</taxon>
        <taxon>Actinomycetes</taxon>
        <taxon>Mycobacteriales</taxon>
        <taxon>Mycobacteriaceae</taxon>
        <taxon>Mycolicibacterium</taxon>
    </lineage>
</organism>
<name>Y2350_MYCS2</name>
<feature type="chain" id="PRO_0000413976" description="Probable S-adenosylmethionine-dependent methyltransferase MSMEG_2350/MSMEI_2290">
    <location>
        <begin position="1"/>
        <end position="257"/>
    </location>
</feature>
<proteinExistence type="evidence at protein level"/>
<dbReference type="EC" id="2.1.1.-"/>
<dbReference type="EMBL" id="CP000480">
    <property type="protein sequence ID" value="ABK72111.1"/>
    <property type="molecule type" value="Genomic_DNA"/>
</dbReference>
<dbReference type="EMBL" id="CP001663">
    <property type="protein sequence ID" value="AFP38760.1"/>
    <property type="status" value="ALT_INIT"/>
    <property type="molecule type" value="Genomic_DNA"/>
</dbReference>
<dbReference type="RefSeq" id="YP_886693.1">
    <property type="nucleotide sequence ID" value="NC_008596.1"/>
</dbReference>
<dbReference type="SMR" id="A0QUV5"/>
<dbReference type="STRING" id="246196.MSMEG_2350"/>
<dbReference type="PaxDb" id="246196-MSMEI_2290"/>
<dbReference type="KEGG" id="msg:MSMEI_2290"/>
<dbReference type="KEGG" id="msm:MSMEG_2350"/>
<dbReference type="PATRIC" id="fig|246196.19.peg.2316"/>
<dbReference type="eggNOG" id="COG2227">
    <property type="taxonomic scope" value="Bacteria"/>
</dbReference>
<dbReference type="OrthoDB" id="9810247at2"/>
<dbReference type="Proteomes" id="UP000000757">
    <property type="component" value="Chromosome"/>
</dbReference>
<dbReference type="Proteomes" id="UP000006158">
    <property type="component" value="Chromosome"/>
</dbReference>
<dbReference type="GO" id="GO:0008757">
    <property type="term" value="F:S-adenosylmethionine-dependent methyltransferase activity"/>
    <property type="evidence" value="ECO:0007669"/>
    <property type="project" value="InterPro"/>
</dbReference>
<dbReference type="GO" id="GO:0032259">
    <property type="term" value="P:methylation"/>
    <property type="evidence" value="ECO:0007669"/>
    <property type="project" value="UniProtKB-KW"/>
</dbReference>
<dbReference type="CDD" id="cd02440">
    <property type="entry name" value="AdoMet_MTases"/>
    <property type="match status" value="1"/>
</dbReference>
<dbReference type="Gene3D" id="3.40.50.150">
    <property type="entry name" value="Vaccinia Virus protein VP39"/>
    <property type="match status" value="1"/>
</dbReference>
<dbReference type="InterPro" id="IPR013216">
    <property type="entry name" value="Methyltransf_11"/>
</dbReference>
<dbReference type="InterPro" id="IPR050508">
    <property type="entry name" value="Methyltransf_Superfamily"/>
</dbReference>
<dbReference type="InterPro" id="IPR029063">
    <property type="entry name" value="SAM-dependent_MTases_sf"/>
</dbReference>
<dbReference type="PANTHER" id="PTHR42912">
    <property type="entry name" value="METHYLTRANSFERASE"/>
    <property type="match status" value="1"/>
</dbReference>
<dbReference type="Pfam" id="PF08241">
    <property type="entry name" value="Methyltransf_11"/>
    <property type="match status" value="1"/>
</dbReference>
<dbReference type="SUPFAM" id="SSF53335">
    <property type="entry name" value="S-adenosyl-L-methionine-dependent methyltransferases"/>
    <property type="match status" value="1"/>
</dbReference>
<protein>
    <recommendedName>
        <fullName>Probable S-adenosylmethionine-dependent methyltransferase MSMEG_2350/MSMEI_2290</fullName>
        <ecNumber>2.1.1.-</ecNumber>
    </recommendedName>
</protein>
<reference key="1">
    <citation type="submission" date="2006-10" db="EMBL/GenBank/DDBJ databases">
        <authorList>
            <person name="Fleischmann R.D."/>
            <person name="Dodson R.J."/>
            <person name="Haft D.H."/>
            <person name="Merkel J.S."/>
            <person name="Nelson W.C."/>
            <person name="Fraser C.M."/>
        </authorList>
    </citation>
    <scope>NUCLEOTIDE SEQUENCE [LARGE SCALE GENOMIC DNA]</scope>
    <source>
        <strain>ATCC 700084 / mc(2)155</strain>
    </source>
</reference>
<reference key="2">
    <citation type="journal article" date="2007" name="Genome Biol.">
        <title>Interrupted coding sequences in Mycobacterium smegmatis: authentic mutations or sequencing errors?</title>
        <authorList>
            <person name="Deshayes C."/>
            <person name="Perrodou E."/>
            <person name="Gallien S."/>
            <person name="Euphrasie D."/>
            <person name="Schaeffer C."/>
            <person name="Van-Dorsselaer A."/>
            <person name="Poch O."/>
            <person name="Lecompte O."/>
            <person name="Reyrat J.-M."/>
        </authorList>
    </citation>
    <scope>NUCLEOTIDE SEQUENCE [LARGE SCALE GENOMIC DNA]</scope>
    <source>
        <strain>ATCC 700084 / mc(2)155</strain>
    </source>
</reference>
<reference key="3">
    <citation type="journal article" date="2009" name="Genome Res.">
        <title>Ortho-proteogenomics: multiple proteomes investigation through orthology and a new MS-based protocol.</title>
        <authorList>
            <person name="Gallien S."/>
            <person name="Perrodou E."/>
            <person name="Carapito C."/>
            <person name="Deshayes C."/>
            <person name="Reyrat J.-M."/>
            <person name="Van Dorsselaer A."/>
            <person name="Poch O."/>
            <person name="Schaeffer C."/>
            <person name="Lecompte O."/>
        </authorList>
    </citation>
    <scope>NUCLEOTIDE SEQUENCE [LARGE SCALE GENOMIC DNA]</scope>
    <source>
        <strain>ATCC 700084 / mc(2)155</strain>
    </source>
</reference>
<reference key="4">
    <citation type="journal article" date="2007" name="J. Biol. Chem.">
        <title>Genetic basis for the biosynthesis of methylglucose lipopolysaccharides in Mycobacterium tuberculosis.</title>
        <authorList>
            <person name="Stadthagen G."/>
            <person name="Sambou T."/>
            <person name="Guerin M."/>
            <person name="Barilone N."/>
            <person name="Boudou F."/>
            <person name="Kordulakova J."/>
            <person name="Charles P."/>
            <person name="Alzari P.M."/>
            <person name="Lemassu A."/>
            <person name="Daffe M."/>
            <person name="Puzo G."/>
            <person name="Gicquel B."/>
            <person name="Riviere M."/>
            <person name="Jackson M."/>
        </authorList>
    </citation>
    <scope>FUNCTION IN MGLP BIOSYNTHESIS</scope>
    <scope>DISRUPTION PHENOTYPE</scope>
    <source>
        <strain>ATCC 700084 / mc(2)155</strain>
    </source>
</reference>
<keyword id="KW-0489">Methyltransferase</keyword>
<keyword id="KW-1185">Reference proteome</keyword>
<keyword id="KW-0949">S-adenosyl-L-methionine</keyword>
<keyword id="KW-0808">Transferase</keyword>
<accession>A0QUV5</accession>
<accession>I7FB40</accession>
<comment type="function">
    <text evidence="1">Probable S-adenosylmethionine-dependent methyltransferase required for the 6-O-methylation of the polysaccharide backbone of 6-O-methylglucosyl lipopolysaccharides (MGLP).</text>
</comment>
<comment type="disruption phenotype">
    <text evidence="1">Inactivation of this gene results in a dramatic reduction in the amounts of 6-O-methylglucosyl lipopolysaccharides (MGLP) synthesized and in the accumulation of precursors of these molecules. Cells lacking this gene do not grow at high temperature (42 degrees Celsius) in Sauton's medium, although their growth is comparable to that of wild-type at 30 and 37 degrees Celsius in this medium.</text>
</comment>
<comment type="similarity">
    <text evidence="2">Belongs to the methyltransferase superfamily.</text>
</comment>
<comment type="sequence caution" evidence="2">
    <conflict type="erroneous initiation">
        <sequence resource="EMBL-CDS" id="AFP38760"/>
    </conflict>
    <text>Extended N-terminus.</text>
</comment>